<protein>
    <recommendedName>
        <fullName>Bifunctional heparan sulfate N-deacetylase/N-sulfotransferase 1</fullName>
        <ecNumber>2.8.2.8</ecNumber>
    </recommendedName>
    <alternativeName>
        <fullName>Glucosaminyl N-deacetylase/N-sulfotransferase 1</fullName>
    </alternativeName>
    <domain>
        <recommendedName>
            <fullName>Heparan sulfate N-deacetylase 1</fullName>
            <ecNumber>3.-.-.-</ecNumber>
        </recommendedName>
    </domain>
    <domain>
        <recommendedName>
            <fullName>Heparan sulfate N-sulfotransferase 1</fullName>
            <ecNumber>2.8.2.-</ecNumber>
        </recommendedName>
    </domain>
</protein>
<dbReference type="EC" id="2.8.2.8"/>
<dbReference type="EC" id="3.-.-.-"/>
<dbReference type="EC" id="2.8.2.-"/>
<dbReference type="EMBL" id="AB037941">
    <property type="protein sequence ID" value="BAB61756.1"/>
    <property type="molecule type" value="mRNA"/>
</dbReference>
<dbReference type="EMBL" id="AB037942">
    <property type="protein sequence ID" value="BAB61757.1"/>
    <property type="molecule type" value="mRNA"/>
</dbReference>
<dbReference type="EMBL" id="AB037943">
    <property type="protein sequence ID" value="BAB61758.1"/>
    <property type="molecule type" value="mRNA"/>
</dbReference>
<dbReference type="EMBL" id="AB038044">
    <property type="protein sequence ID" value="BAB62394.1"/>
    <property type="molecule type" value="mRNA"/>
</dbReference>
<dbReference type="EMBL" id="FO080903">
    <property type="protein sequence ID" value="CCD67652.2"/>
    <property type="molecule type" value="Genomic_DNA"/>
</dbReference>
<dbReference type="PIR" id="T29486">
    <property type="entry name" value="T29486"/>
</dbReference>
<dbReference type="RefSeq" id="NP_501491.4">
    <property type="nucleotide sequence ID" value="NM_069090.4"/>
</dbReference>
<dbReference type="SMR" id="Q966W3"/>
<dbReference type="FunCoup" id="Q966W3">
    <property type="interactions" value="2263"/>
</dbReference>
<dbReference type="STRING" id="6239.F08B4.6.1"/>
<dbReference type="GlyCosmos" id="Q966W3">
    <property type="glycosylation" value="9 sites, No reported glycans"/>
</dbReference>
<dbReference type="PaxDb" id="6239-F08B4.6"/>
<dbReference type="EnsemblMetazoa" id="F08B4.6.1">
    <property type="protein sequence ID" value="F08B4.6.1"/>
    <property type="gene ID" value="WBGene00002028"/>
</dbReference>
<dbReference type="GeneID" id="177675"/>
<dbReference type="KEGG" id="cel:CELE_F08B4.6"/>
<dbReference type="UCSC" id="F08B4.6">
    <property type="organism name" value="c. elegans"/>
</dbReference>
<dbReference type="AGR" id="WB:WBGene00002028"/>
<dbReference type="CTD" id="177675"/>
<dbReference type="WormBase" id="F08B4.6">
    <property type="protein sequence ID" value="CE46914"/>
    <property type="gene ID" value="WBGene00002028"/>
    <property type="gene designation" value="hst-1"/>
</dbReference>
<dbReference type="eggNOG" id="KOG3703">
    <property type="taxonomic scope" value="Eukaryota"/>
</dbReference>
<dbReference type="GeneTree" id="ENSGT00940000168016"/>
<dbReference type="HOGENOM" id="CLU_011357_2_0_1"/>
<dbReference type="InParanoid" id="Q966W3"/>
<dbReference type="OMA" id="GLKFWLH"/>
<dbReference type="OrthoDB" id="8958249at2759"/>
<dbReference type="PhylomeDB" id="Q966W3"/>
<dbReference type="Reactome" id="R-CEL-2022928">
    <property type="pathway name" value="HS-GAG biosynthesis"/>
</dbReference>
<dbReference type="UniPathway" id="UPA00756"/>
<dbReference type="UniPathway" id="UPA00862"/>
<dbReference type="PRO" id="PR:Q966W3"/>
<dbReference type="Proteomes" id="UP000001940">
    <property type="component" value="Chromosome IV"/>
</dbReference>
<dbReference type="Bgee" id="WBGene00002028">
    <property type="expression patterns" value="Expressed in germ line (C elegans) and 4 other cell types or tissues"/>
</dbReference>
<dbReference type="GO" id="GO:0005794">
    <property type="term" value="C:Golgi apparatus"/>
    <property type="evidence" value="ECO:0000318"/>
    <property type="project" value="GO_Central"/>
</dbReference>
<dbReference type="GO" id="GO:0000139">
    <property type="term" value="C:Golgi membrane"/>
    <property type="evidence" value="ECO:0007669"/>
    <property type="project" value="UniProtKB-SubCell"/>
</dbReference>
<dbReference type="GO" id="GO:0019213">
    <property type="term" value="F:deacetylase activity"/>
    <property type="evidence" value="ECO:0000318"/>
    <property type="project" value="GO_Central"/>
</dbReference>
<dbReference type="GO" id="GO:0015016">
    <property type="term" value="F:heparan sulfate N-sulfotransferase activity"/>
    <property type="evidence" value="ECO:0000318"/>
    <property type="project" value="GO_Central"/>
</dbReference>
<dbReference type="GO" id="GO:0016787">
    <property type="term" value="F:hydrolase activity"/>
    <property type="evidence" value="ECO:0007669"/>
    <property type="project" value="UniProtKB-KW"/>
</dbReference>
<dbReference type="GO" id="GO:0015012">
    <property type="term" value="P:heparan sulfate proteoglycan biosynthetic process"/>
    <property type="evidence" value="ECO:0007669"/>
    <property type="project" value="UniProtKB-UniPathway"/>
</dbReference>
<dbReference type="GO" id="GO:0030210">
    <property type="term" value="P:heparin proteoglycan biosynthetic process"/>
    <property type="evidence" value="ECO:0007669"/>
    <property type="project" value="UniProtKB-UniPathway"/>
</dbReference>
<dbReference type="Gene3D" id="3.40.50.300">
    <property type="entry name" value="P-loop containing nucleotide triphosphate hydrolases"/>
    <property type="match status" value="1"/>
</dbReference>
<dbReference type="InterPro" id="IPR021930">
    <property type="entry name" value="Heparan_SO4_deacetylase_dom"/>
</dbReference>
<dbReference type="InterPro" id="IPR056793">
    <property type="entry name" value="HSNSD_N"/>
</dbReference>
<dbReference type="InterPro" id="IPR037359">
    <property type="entry name" value="NST/OST"/>
</dbReference>
<dbReference type="InterPro" id="IPR027417">
    <property type="entry name" value="P-loop_NTPase"/>
</dbReference>
<dbReference type="InterPro" id="IPR000863">
    <property type="entry name" value="Sulfotransferase_dom"/>
</dbReference>
<dbReference type="PANTHER" id="PTHR10605:SF56">
    <property type="entry name" value="BIFUNCTIONAL HEPARAN SULFATE N-DEACETYLASE_N-SULFOTRANSFERASE"/>
    <property type="match status" value="1"/>
</dbReference>
<dbReference type="PANTHER" id="PTHR10605">
    <property type="entry name" value="HEPARAN SULFATE SULFOTRANSFERASE"/>
    <property type="match status" value="1"/>
</dbReference>
<dbReference type="Pfam" id="PF12062">
    <property type="entry name" value="HSNSD-CE"/>
    <property type="match status" value="1"/>
</dbReference>
<dbReference type="Pfam" id="PF25119">
    <property type="entry name" value="HSNSD_N"/>
    <property type="match status" value="1"/>
</dbReference>
<dbReference type="Pfam" id="PF00685">
    <property type="entry name" value="Sulfotransfer_1"/>
    <property type="match status" value="1"/>
</dbReference>
<dbReference type="SUPFAM" id="SSF52540">
    <property type="entry name" value="P-loop containing nucleoside triphosphate hydrolases"/>
    <property type="match status" value="1"/>
</dbReference>
<reference key="1">
    <citation type="submission" date="2000-02" db="EMBL/GenBank/DDBJ databases">
        <title>Molecular characterization of N-deacetylase/N-sulfotransferase in worm.</title>
        <authorList>
            <person name="Aikawa J."/>
        </authorList>
    </citation>
    <scope>NUCLEOTIDE SEQUENCE [MRNA]</scope>
</reference>
<reference key="2">
    <citation type="journal article" date="1998" name="Science">
        <title>Genome sequence of the nematode C. elegans: a platform for investigating biology.</title>
        <authorList>
            <consortium name="The C. elegans sequencing consortium"/>
        </authorList>
    </citation>
    <scope>NUCLEOTIDE SEQUENCE [LARGE SCALE GENOMIC DNA]</scope>
    <source>
        <strain>Bristol N2</strain>
    </source>
</reference>
<reference key="3">
    <citation type="book" date="2003" name="Proceedings of the 14th international C. elegans meeting">
        <title>Structure and function of heparan sulfate/heparin N-deacetylase/ N-sulfotransferase in worm.</title>
        <authorList>
            <person name="Aikawa J."/>
        </authorList>
    </citation>
    <scope>FUNCTION</scope>
    <scope>TISSUE SPECIFICITY</scope>
</reference>
<comment type="function">
    <text evidence="5">Essential bifunctional enzyme that catalyzes both the N-deacetylation and the N-sulfation of glucosamine (GlcNAc) of the glycosaminoglycan in heparan sulfate. Modifies the GlcNAc-GlcA disaccharide repeating sugar backbone to make N-sulfated heparosan, a prerequisite substrate for later modifications in heparin biosynthesis (Probable).</text>
</comment>
<comment type="catalytic activity">
    <reaction>
        <text>alpha-D-glucosaminyl-[heparan sulfate](n) + 3'-phosphoadenylyl sulfate = N-sulfo-alpha-D-glucosaminyl-[heparan sulfate](n) + adenosine 3',5'-bisphosphate + 2 H(+)</text>
        <dbReference type="Rhea" id="RHEA:21980"/>
        <dbReference type="Rhea" id="RHEA-COMP:9830"/>
        <dbReference type="Rhea" id="RHEA-COMP:14602"/>
        <dbReference type="ChEBI" id="CHEBI:15378"/>
        <dbReference type="ChEBI" id="CHEBI:58339"/>
        <dbReference type="ChEBI" id="CHEBI:58343"/>
        <dbReference type="ChEBI" id="CHEBI:58388"/>
        <dbReference type="ChEBI" id="CHEBI:140572"/>
        <dbReference type="EC" id="2.8.2.8"/>
    </reaction>
</comment>
<comment type="pathway">
    <text>Glycan metabolism; heparan sulfate biosynthesis.</text>
</comment>
<comment type="pathway">
    <text>Glycan metabolism; heparin biosynthesis.</text>
</comment>
<comment type="subunit">
    <text evidence="1">Monomer.</text>
</comment>
<comment type="subcellular location">
    <subcellularLocation>
        <location evidence="1">Golgi apparatus membrane</location>
        <topology evidence="1">Single-pass type II membrane protein</topology>
    </subcellularLocation>
</comment>
<comment type="tissue specificity">
    <text evidence="3">Present in some specific neurons in head and tail regions and muscles.</text>
</comment>
<comment type="similarity">
    <text evidence="4">Belongs to the sulfotransferase 1 family. NDST subfamily.</text>
</comment>
<name>NDST_CAEEL</name>
<gene>
    <name type="primary">hst-1</name>
    <name type="ORF">F08B4.6</name>
</gene>
<keyword id="KW-1015">Disulfide bond</keyword>
<keyword id="KW-0325">Glycoprotein</keyword>
<keyword id="KW-0333">Golgi apparatus</keyword>
<keyword id="KW-0378">Hydrolase</keyword>
<keyword id="KW-0472">Membrane</keyword>
<keyword id="KW-0511">Multifunctional enzyme</keyword>
<keyword id="KW-1185">Reference proteome</keyword>
<keyword id="KW-0735">Signal-anchor</keyword>
<keyword id="KW-0808">Transferase</keyword>
<keyword id="KW-0812">Transmembrane</keyword>
<keyword id="KW-1133">Transmembrane helix</keyword>
<sequence length="852" mass="99061">MIITPYLNRKITRPLKWILALIFLYLIYICLFSNNSKPPKPRKKPKLVENYTCPFARTEGTASENLFFHTNNGTDARILVILDSLFSRHGKTIIQILNSQKLQFKAEAVSKNLPVLTTSRRGRYSLIIIENYYKYLNMAQWNRQLLDKYCKEYRVPMFSFMSSKPNDQLKRIKIKGSSLWMWQNQRIQRLAVTPSIIHRISKIGNYRQFSSSDPADWILFETSEKFESVLSGTVKSGYERAVVVRDKGLEDGVERIIFGRNLTDFQVKITFLDALWWAMGNQKSFTLDRFVQVDIDDVFVGAQGTRIVEEDVRKLISTQKEFRNYVQNFTFMLGFSGSYFRNGDDLEDRGDEFLVENAEKFVWFPHMWRHNHAHEHNFTYLEAIMAQNKLFAQNMHLPVDYPYAIAPQHDGVFPVHEQLFRAWRKVWNVSVTATEEYPHFKPATARKGFIHAGIHVLPRQTCGLYTHTQLFDEYPEGFDKVQKSIEGGDLFFTILLNPISIFMTHQQNYAYDRLALYTFENLFRFIKCWTNIKLKWQDPLTSSQLYFQKFPDERTPLWTNPCTDPRHHAILPPSINCTKKSLPDLLIIGPQKTGSTALASFLSLHPNTSQNTPVPGSFEEVQFFGGQNYLKGVEWYMSNFPSSSTVTFEKSATYFDNPSAPKQAASLVPHAKIVIILQNPAQRAYSWFQHILAHEDPVAITAGSLEVILDSNSTSSKKVRQRCISGGRYVHHLTKWLEHFSLQQMIFVDSDELKMKPPTVLNSLSKWLDLPEFPFETYIRYSPSKGFHCRLLDGKTKCLGESKGRKYPEMPENLRRKLDKIFSLDNSALYKFLRKNRLKIPTWLEESVRIRA</sequence>
<organism>
    <name type="scientific">Caenorhabditis elegans</name>
    <dbReference type="NCBI Taxonomy" id="6239"/>
    <lineage>
        <taxon>Eukaryota</taxon>
        <taxon>Metazoa</taxon>
        <taxon>Ecdysozoa</taxon>
        <taxon>Nematoda</taxon>
        <taxon>Chromadorea</taxon>
        <taxon>Rhabditida</taxon>
        <taxon>Rhabditina</taxon>
        <taxon>Rhabditomorpha</taxon>
        <taxon>Rhabditoidea</taxon>
        <taxon>Rhabditidae</taxon>
        <taxon>Peloderinae</taxon>
        <taxon>Caenorhabditis</taxon>
    </lineage>
</organism>
<proteinExistence type="evidence at transcript level"/>
<accession>Q966W3</accession>
<accession>Q19197</accession>
<accession>Q966W4</accession>
<accession>Q966W5</accession>
<accession>Q966W6</accession>
<feature type="chain" id="PRO_0000225664" description="Bifunctional heparan sulfate N-deacetylase/N-sulfotransferase 1">
    <location>
        <begin position="1"/>
        <end position="852"/>
    </location>
</feature>
<feature type="topological domain" description="Cytoplasmic" evidence="2">
    <location>
        <begin position="1"/>
        <end position="13"/>
    </location>
</feature>
<feature type="transmembrane region" description="Helical; Signal-anchor for type II membrane protein" evidence="2">
    <location>
        <begin position="14"/>
        <end position="34"/>
    </location>
</feature>
<feature type="topological domain" description="Lumenal" evidence="2">
    <location>
        <begin position="35"/>
        <end position="852"/>
    </location>
</feature>
<feature type="region of interest" description="Heparan sulfate N-deacetylase 1">
    <location>
        <begin position="34"/>
        <end position="574"/>
    </location>
</feature>
<feature type="region of interest" description="Heparan sulfate N-sulfotransferase 1">
    <location>
        <begin position="575"/>
        <end position="852"/>
    </location>
</feature>
<feature type="active site" description="For sulfotransferase activity" evidence="1">
    <location>
        <position position="592"/>
    </location>
</feature>
<feature type="binding site" evidence="1">
    <location>
        <begin position="592"/>
        <end position="596"/>
    </location>
    <ligand>
        <name>3'-phosphoadenylyl sulfate</name>
        <dbReference type="ChEBI" id="CHEBI:58339"/>
    </ligand>
</feature>
<feature type="binding site" evidence="1">
    <location>
        <position position="686"/>
    </location>
    <ligand>
        <name>3'-phosphoadenylyl sulfate</name>
        <dbReference type="ChEBI" id="CHEBI:58339"/>
    </ligand>
</feature>
<feature type="binding site" evidence="1">
    <location>
        <begin position="803"/>
        <end position="807"/>
    </location>
    <ligand>
        <name>3'-phosphoadenylyl sulfate</name>
        <dbReference type="ChEBI" id="CHEBI:58339"/>
    </ligand>
</feature>
<feature type="glycosylation site" description="N-linked (GlcNAc...) asparagine" evidence="2">
    <location>
        <position position="50"/>
    </location>
</feature>
<feature type="glycosylation site" description="N-linked (GlcNAc...) asparagine" evidence="2">
    <location>
        <position position="72"/>
    </location>
</feature>
<feature type="glycosylation site" description="N-linked (GlcNAc...) asparagine" evidence="2">
    <location>
        <position position="261"/>
    </location>
</feature>
<feature type="glycosylation site" description="N-linked (GlcNAc...) asparagine" evidence="2">
    <location>
        <position position="328"/>
    </location>
</feature>
<feature type="glycosylation site" description="N-linked (GlcNAc...) asparagine" evidence="2">
    <location>
        <position position="377"/>
    </location>
</feature>
<feature type="glycosylation site" description="N-linked (GlcNAc...) asparagine" evidence="2">
    <location>
        <position position="428"/>
    </location>
</feature>
<feature type="glycosylation site" description="N-linked (GlcNAc...) asparagine" evidence="2">
    <location>
        <position position="576"/>
    </location>
</feature>
<feature type="glycosylation site" description="N-linked (GlcNAc...) asparagine" evidence="2">
    <location>
        <position position="607"/>
    </location>
</feature>
<feature type="glycosylation site" description="N-linked (GlcNAc...) asparagine" evidence="2">
    <location>
        <position position="712"/>
    </location>
</feature>
<feature type="disulfide bond" evidence="1">
    <location>
        <begin position="789"/>
        <end position="798"/>
    </location>
</feature>
<evidence type="ECO:0000250" key="1"/>
<evidence type="ECO:0000255" key="2"/>
<evidence type="ECO:0000269" key="3">
    <source ref="3"/>
</evidence>
<evidence type="ECO:0000305" key="4"/>
<evidence type="ECO:0000305" key="5">
    <source ref="3"/>
</evidence>